<keyword id="KW-0903">Direct protein sequencing</keyword>
<organism evidence="2">
    <name type="scientific">Naegleria fowleri</name>
    <name type="common">Brain eating amoeba</name>
    <dbReference type="NCBI Taxonomy" id="5763"/>
    <lineage>
        <taxon>Eukaryota</taxon>
        <taxon>Discoba</taxon>
        <taxon>Heterolobosea</taxon>
        <taxon>Tetramitia</taxon>
        <taxon>Eutetramitia</taxon>
        <taxon>Vahlkampfiidae</taxon>
        <taxon>Naegleria</taxon>
    </lineage>
</organism>
<evidence type="ECO:0000256" key="1">
    <source>
        <dbReference type="SAM" id="MobiDB-lite"/>
    </source>
</evidence>
<evidence type="ECO:0000305" key="2"/>
<accession>P83889</accession>
<comment type="miscellaneous">
    <text evidence="2">On the 2D-gel the determined pI of this unknown protein is: 6.5, its MW is: 30.8 kDa.</text>
</comment>
<sequence>ATSAAQGAALDESVRKVLKP</sequence>
<feature type="chain" id="PRO_0000055489" description="Unknown protein NF009 from 2D-PAGE">
    <location>
        <begin position="1"/>
        <end position="20" status="greater than"/>
    </location>
</feature>
<feature type="region of interest" description="Disordered" evidence="1">
    <location>
        <begin position="1"/>
        <end position="20"/>
    </location>
</feature>
<feature type="non-terminal residue" evidence="2">
    <location>
        <position position="20"/>
    </location>
</feature>
<reference key="1">
    <citation type="submission" date="2004-04" db="UniProtKB">
        <title>Comparative study of protein profiles on pathogenic and nonpathogenic Naegleria species by 2D-PAGE.</title>
        <authorList>
            <person name="Omura M."/>
            <person name="Furushima-Shimogawara R."/>
            <person name="Izumiyama S."/>
            <person name="Endo T."/>
        </authorList>
    </citation>
    <scope>PROTEIN SEQUENCE</scope>
    <source>
        <strain evidence="2">ATCC 30214 / Nf 66</strain>
    </source>
</reference>
<protein>
    <recommendedName>
        <fullName>Unknown protein NF009 from 2D-PAGE</fullName>
    </recommendedName>
</protein>
<proteinExistence type="evidence at protein level"/>
<name>NF09_NAEFO</name>